<protein>
    <recommendedName>
        <fullName>Putative glycosyltransferase TagX</fullName>
        <ecNumber>2.4.-.-</ecNumber>
    </recommendedName>
    <alternativeName>
        <fullName>Teichoic acid biosynthesis protein X</fullName>
    </alternativeName>
</protein>
<evidence type="ECO:0000305" key="1"/>
<keyword id="KW-0133">Cell shape</keyword>
<keyword id="KW-0961">Cell wall biogenesis/degradation</keyword>
<keyword id="KW-0328">Glycosyltransferase</keyword>
<keyword id="KW-0777">Teichoic acid biosynthesis</keyword>
<keyword id="KW-0808">Transferase</keyword>
<dbReference type="EC" id="2.4.-.-"/>
<dbReference type="EMBL" id="BA000017">
    <property type="protein sequence ID" value="BAB56802.1"/>
    <property type="status" value="ALT_INIT"/>
    <property type="molecule type" value="Genomic_DNA"/>
</dbReference>
<dbReference type="RefSeq" id="WP_001241182.1">
    <property type="nucleotide sequence ID" value="NC_002758.2"/>
</dbReference>
<dbReference type="SMR" id="Q99VX6"/>
<dbReference type="CAZy" id="GT2">
    <property type="family name" value="Glycosyltransferase Family 2"/>
</dbReference>
<dbReference type="KEGG" id="sav:SAV0640"/>
<dbReference type="HOGENOM" id="CLU_067098_0_0_9"/>
<dbReference type="Proteomes" id="UP000002481">
    <property type="component" value="Chromosome"/>
</dbReference>
<dbReference type="GO" id="GO:0016757">
    <property type="term" value="F:glycosyltransferase activity"/>
    <property type="evidence" value="ECO:0007669"/>
    <property type="project" value="UniProtKB-KW"/>
</dbReference>
<dbReference type="GO" id="GO:0071555">
    <property type="term" value="P:cell wall organization"/>
    <property type="evidence" value="ECO:0007669"/>
    <property type="project" value="UniProtKB-KW"/>
</dbReference>
<dbReference type="GO" id="GO:0008360">
    <property type="term" value="P:regulation of cell shape"/>
    <property type="evidence" value="ECO:0007669"/>
    <property type="project" value="UniProtKB-KW"/>
</dbReference>
<dbReference type="GO" id="GO:0019350">
    <property type="term" value="P:teichoic acid biosynthetic process"/>
    <property type="evidence" value="ECO:0007669"/>
    <property type="project" value="UniProtKB-KW"/>
</dbReference>
<dbReference type="CDD" id="cd00761">
    <property type="entry name" value="Glyco_tranf_GTA_type"/>
    <property type="match status" value="1"/>
</dbReference>
<dbReference type="Gene3D" id="3.90.550.10">
    <property type="entry name" value="Spore Coat Polysaccharide Biosynthesis Protein SpsA, Chain A"/>
    <property type="match status" value="1"/>
</dbReference>
<dbReference type="InterPro" id="IPR001173">
    <property type="entry name" value="Glyco_trans_2-like"/>
</dbReference>
<dbReference type="InterPro" id="IPR050834">
    <property type="entry name" value="Glycosyltransf_2"/>
</dbReference>
<dbReference type="InterPro" id="IPR029044">
    <property type="entry name" value="Nucleotide-diphossugar_trans"/>
</dbReference>
<dbReference type="PANTHER" id="PTHR43685">
    <property type="entry name" value="GLYCOSYLTRANSFERASE"/>
    <property type="match status" value="1"/>
</dbReference>
<dbReference type="PANTHER" id="PTHR43685:SF11">
    <property type="entry name" value="GLYCOSYLTRANSFERASE TAGX-RELATED"/>
    <property type="match status" value="1"/>
</dbReference>
<dbReference type="Pfam" id="PF00535">
    <property type="entry name" value="Glycos_transf_2"/>
    <property type="match status" value="1"/>
</dbReference>
<dbReference type="SUPFAM" id="SSF53448">
    <property type="entry name" value="Nucleotide-diphospho-sugar transferases"/>
    <property type="match status" value="1"/>
</dbReference>
<sequence>MRLTIIIPTCNNEATIRQLLISIESKEHYRILCIDGGSTDQTIPMIERLQRELKHISLIQLQNASIATCINKGLMDIKMTDPHDSDAFMVINPTSIVLPGKLDRLTAAFKNNDNIDMVIGQRAYNYHGEWKLKSADEFIKDNRIVTLTEQPDLLSMMSFDGKLFSAKFAELQCDETLANTYNHAILVKAMQKATDIHLVSQMIVGDNDIDTHATSNDEDFNRYIIEIMKIRQRVMEMLLLPEQRLLYSDMVDRILFNNSLKYYMNEHPAVTHTTIQLVKDYIMSMQHSDYVSQNMFDIINTVEFIGENWDREIYELWRQTLIQVGINRPTYKKFLIQLKGRKFAHRTKSMLKR</sequence>
<proteinExistence type="inferred from homology"/>
<reference key="1">
    <citation type="journal article" date="2001" name="Lancet">
        <title>Whole genome sequencing of meticillin-resistant Staphylococcus aureus.</title>
        <authorList>
            <person name="Kuroda M."/>
            <person name="Ohta T."/>
            <person name="Uchiyama I."/>
            <person name="Baba T."/>
            <person name="Yuzawa H."/>
            <person name="Kobayashi I."/>
            <person name="Cui L."/>
            <person name="Oguchi A."/>
            <person name="Aoki K."/>
            <person name="Nagai Y."/>
            <person name="Lian J.-Q."/>
            <person name="Ito T."/>
            <person name="Kanamori M."/>
            <person name="Matsumaru H."/>
            <person name="Maruyama A."/>
            <person name="Murakami H."/>
            <person name="Hosoyama A."/>
            <person name="Mizutani-Ui Y."/>
            <person name="Takahashi N.K."/>
            <person name="Sawano T."/>
            <person name="Inoue R."/>
            <person name="Kaito C."/>
            <person name="Sekimizu K."/>
            <person name="Hirakawa H."/>
            <person name="Kuhara S."/>
            <person name="Goto S."/>
            <person name="Yabuzaki J."/>
            <person name="Kanehisa M."/>
            <person name="Yamashita A."/>
            <person name="Oshima K."/>
            <person name="Furuya K."/>
            <person name="Yoshino C."/>
            <person name="Shiba T."/>
            <person name="Hattori M."/>
            <person name="Ogasawara N."/>
            <person name="Hayashi H."/>
            <person name="Hiramatsu K."/>
        </authorList>
    </citation>
    <scope>NUCLEOTIDE SEQUENCE [LARGE SCALE GENOMIC DNA]</scope>
    <source>
        <strain>Mu50 / ATCC 700699</strain>
    </source>
</reference>
<gene>
    <name type="primary">tagX</name>
    <name type="ordered locus">SAV0640</name>
</gene>
<name>TAGX_STAAM</name>
<comment type="similarity">
    <text evidence="1">Belongs to the glycosyltransferase 2 family.</text>
</comment>
<comment type="sequence caution" evidence="1">
    <conflict type="erroneous initiation">
        <sequence resource="EMBL-CDS" id="BAB56802"/>
    </conflict>
</comment>
<feature type="chain" id="PRO_0000059224" description="Putative glycosyltransferase TagX">
    <location>
        <begin position="1"/>
        <end position="353"/>
    </location>
</feature>
<accession>Q99VX6</accession>
<organism>
    <name type="scientific">Staphylococcus aureus (strain Mu50 / ATCC 700699)</name>
    <dbReference type="NCBI Taxonomy" id="158878"/>
    <lineage>
        <taxon>Bacteria</taxon>
        <taxon>Bacillati</taxon>
        <taxon>Bacillota</taxon>
        <taxon>Bacilli</taxon>
        <taxon>Bacillales</taxon>
        <taxon>Staphylococcaceae</taxon>
        <taxon>Staphylococcus</taxon>
    </lineage>
</organism>